<sequence>MPDVIRITFPDGAEKEFPKGTTTEDIAASISPGLKKKAIAGKLNGRFVDLRTPLHEDGELVIITQDMPEALDILRHSTAHLMAQAIKRLYGNVKLGVGPVIENGFYYDIDMEHKLTPDDLPKIEAEMRKIVKENLDIVRKEVSREEAIRLYEEIGDELKLELIADIPEGEPISIYEQGEFFDLCRGVHVPSTGKIKEFKLLSISGAYWRGDSNNKMLQRIYGTAFFKKEDLDRYLRLLEEAKERDHRKLGKELELFTTSQQVGQGLPLWLPKGATIRRIIERYIVDKEVALGYDHVYTPVLGSVELYKTSGHWDHYKENMFPPMEMDNEELVLRPMNCPHHMMIYKSKLHSYRELPIRIAELGTMHRYEMSGALTGLQRVRGMTLNDAHIFVRPDQIKDEFKRVVNLILEVYKDFGIEEYSFRLSYRDPHDKEKYYDDDEMWEKAQRMLREAMDELGLDYYEAEGEAAFYGPKLDVQVRTALGKDETLSTVQLDFLLPERFDLTYIGEDGKPHRPVVIHRGVVSTMERFVAFLIEEYKGAFPTWLAPVQVKVIPVSPEAHLDYAYDVQRTLKERGFRVEVDERDEKIGYKIREAQMQKIPYMLVVGDKEVSERAVNVRRYGEKESRTMGLDEFMALLADDVREKRTRLGKAQ</sequence>
<protein>
    <recommendedName>
        <fullName evidence="1">Threonine--tRNA ligase</fullName>
        <ecNumber evidence="1">6.1.1.3</ecNumber>
    </recommendedName>
    <alternativeName>
        <fullName evidence="1">Threonyl-tRNA synthetase</fullName>
        <shortName evidence="1">ThrRS</shortName>
    </alternativeName>
</protein>
<proteinExistence type="inferred from homology"/>
<name>SYT_GEOKA</name>
<keyword id="KW-0030">Aminoacyl-tRNA synthetase</keyword>
<keyword id="KW-0067">ATP-binding</keyword>
<keyword id="KW-0963">Cytoplasm</keyword>
<keyword id="KW-0436">Ligase</keyword>
<keyword id="KW-0479">Metal-binding</keyword>
<keyword id="KW-0547">Nucleotide-binding</keyword>
<keyword id="KW-0648">Protein biosynthesis</keyword>
<keyword id="KW-1185">Reference proteome</keyword>
<keyword id="KW-0694">RNA-binding</keyword>
<keyword id="KW-0820">tRNA-binding</keyword>
<keyword id="KW-0862">Zinc</keyword>
<comment type="function">
    <text evidence="1">Catalyzes the attachment of threonine to tRNA(Thr) in a two-step reaction: L-threonine is first activated by ATP to form Thr-AMP and then transferred to the acceptor end of tRNA(Thr). Also edits incorrectly charged L-seryl-tRNA(Thr).</text>
</comment>
<comment type="catalytic activity">
    <reaction evidence="1">
        <text>tRNA(Thr) + L-threonine + ATP = L-threonyl-tRNA(Thr) + AMP + diphosphate + H(+)</text>
        <dbReference type="Rhea" id="RHEA:24624"/>
        <dbReference type="Rhea" id="RHEA-COMP:9670"/>
        <dbReference type="Rhea" id="RHEA-COMP:9704"/>
        <dbReference type="ChEBI" id="CHEBI:15378"/>
        <dbReference type="ChEBI" id="CHEBI:30616"/>
        <dbReference type="ChEBI" id="CHEBI:33019"/>
        <dbReference type="ChEBI" id="CHEBI:57926"/>
        <dbReference type="ChEBI" id="CHEBI:78442"/>
        <dbReference type="ChEBI" id="CHEBI:78534"/>
        <dbReference type="ChEBI" id="CHEBI:456215"/>
        <dbReference type="EC" id="6.1.1.3"/>
    </reaction>
</comment>
<comment type="cofactor">
    <cofactor evidence="1">
        <name>Zn(2+)</name>
        <dbReference type="ChEBI" id="CHEBI:29105"/>
    </cofactor>
    <text evidence="1">Binds 1 zinc ion per subunit.</text>
</comment>
<comment type="subunit">
    <text evidence="1">Homodimer.</text>
</comment>
<comment type="subcellular location">
    <subcellularLocation>
        <location evidence="1">Cytoplasm</location>
    </subcellularLocation>
</comment>
<comment type="similarity">
    <text evidence="1">Belongs to the class-II aminoacyl-tRNA synthetase family.</text>
</comment>
<accession>Q5KWD2</accession>
<evidence type="ECO:0000255" key="1">
    <source>
        <dbReference type="HAMAP-Rule" id="MF_00184"/>
    </source>
</evidence>
<evidence type="ECO:0000255" key="2">
    <source>
        <dbReference type="PROSITE-ProRule" id="PRU01228"/>
    </source>
</evidence>
<feature type="chain" id="PRO_0000100982" description="Threonine--tRNA ligase">
    <location>
        <begin position="1"/>
        <end position="652"/>
    </location>
</feature>
<feature type="domain" description="TGS" evidence="2">
    <location>
        <begin position="1"/>
        <end position="64"/>
    </location>
</feature>
<feature type="region of interest" description="Catalytic" evidence="1">
    <location>
        <begin position="245"/>
        <end position="542"/>
    </location>
</feature>
<feature type="binding site" evidence="1">
    <location>
        <position position="338"/>
    </location>
    <ligand>
        <name>Zn(2+)</name>
        <dbReference type="ChEBI" id="CHEBI:29105"/>
    </ligand>
</feature>
<feature type="binding site" evidence="1">
    <location>
        <position position="389"/>
    </location>
    <ligand>
        <name>Zn(2+)</name>
        <dbReference type="ChEBI" id="CHEBI:29105"/>
    </ligand>
</feature>
<feature type="binding site" evidence="1">
    <location>
        <position position="519"/>
    </location>
    <ligand>
        <name>Zn(2+)</name>
        <dbReference type="ChEBI" id="CHEBI:29105"/>
    </ligand>
</feature>
<dbReference type="EC" id="6.1.1.3" evidence="1"/>
<dbReference type="EMBL" id="BA000043">
    <property type="protein sequence ID" value="BAD77004.1"/>
    <property type="molecule type" value="Genomic_DNA"/>
</dbReference>
<dbReference type="RefSeq" id="WP_011232193.1">
    <property type="nucleotide sequence ID" value="NC_006510.1"/>
</dbReference>
<dbReference type="SMR" id="Q5KWD2"/>
<dbReference type="STRING" id="235909.GK2719"/>
<dbReference type="KEGG" id="gka:GK2719"/>
<dbReference type="PATRIC" id="fig|235909.7.peg.2903"/>
<dbReference type="eggNOG" id="COG0441">
    <property type="taxonomic scope" value="Bacteria"/>
</dbReference>
<dbReference type="HOGENOM" id="CLU_008554_3_2_9"/>
<dbReference type="Proteomes" id="UP000001172">
    <property type="component" value="Chromosome"/>
</dbReference>
<dbReference type="GO" id="GO:0005737">
    <property type="term" value="C:cytoplasm"/>
    <property type="evidence" value="ECO:0007669"/>
    <property type="project" value="UniProtKB-SubCell"/>
</dbReference>
<dbReference type="GO" id="GO:0005524">
    <property type="term" value="F:ATP binding"/>
    <property type="evidence" value="ECO:0007669"/>
    <property type="project" value="UniProtKB-UniRule"/>
</dbReference>
<dbReference type="GO" id="GO:0140096">
    <property type="term" value="F:catalytic activity, acting on a protein"/>
    <property type="evidence" value="ECO:0007669"/>
    <property type="project" value="UniProtKB-ARBA"/>
</dbReference>
<dbReference type="GO" id="GO:0046872">
    <property type="term" value="F:metal ion binding"/>
    <property type="evidence" value="ECO:0007669"/>
    <property type="project" value="UniProtKB-KW"/>
</dbReference>
<dbReference type="GO" id="GO:0004829">
    <property type="term" value="F:threonine-tRNA ligase activity"/>
    <property type="evidence" value="ECO:0007669"/>
    <property type="project" value="UniProtKB-UniRule"/>
</dbReference>
<dbReference type="GO" id="GO:0016740">
    <property type="term" value="F:transferase activity"/>
    <property type="evidence" value="ECO:0007669"/>
    <property type="project" value="UniProtKB-ARBA"/>
</dbReference>
<dbReference type="GO" id="GO:0000049">
    <property type="term" value="F:tRNA binding"/>
    <property type="evidence" value="ECO:0007669"/>
    <property type="project" value="UniProtKB-KW"/>
</dbReference>
<dbReference type="GO" id="GO:0006435">
    <property type="term" value="P:threonyl-tRNA aminoacylation"/>
    <property type="evidence" value="ECO:0007669"/>
    <property type="project" value="UniProtKB-UniRule"/>
</dbReference>
<dbReference type="CDD" id="cd01667">
    <property type="entry name" value="TGS_ThrRS"/>
    <property type="match status" value="1"/>
</dbReference>
<dbReference type="CDD" id="cd00860">
    <property type="entry name" value="ThrRS_anticodon"/>
    <property type="match status" value="1"/>
</dbReference>
<dbReference type="CDD" id="cd00771">
    <property type="entry name" value="ThrRS_core"/>
    <property type="match status" value="1"/>
</dbReference>
<dbReference type="FunFam" id="3.10.20.30:FF:000005">
    <property type="entry name" value="Threonine--tRNA ligase"/>
    <property type="match status" value="1"/>
</dbReference>
<dbReference type="FunFam" id="3.30.54.20:FF:000002">
    <property type="entry name" value="Threonine--tRNA ligase"/>
    <property type="match status" value="1"/>
</dbReference>
<dbReference type="FunFam" id="3.30.930.10:FF:000002">
    <property type="entry name" value="Threonine--tRNA ligase"/>
    <property type="match status" value="1"/>
</dbReference>
<dbReference type="FunFam" id="3.40.50.800:FF:000001">
    <property type="entry name" value="Threonine--tRNA ligase"/>
    <property type="match status" value="1"/>
</dbReference>
<dbReference type="FunFam" id="3.30.980.10:FF:000005">
    <property type="entry name" value="Threonyl-tRNA synthetase, mitochondrial"/>
    <property type="match status" value="1"/>
</dbReference>
<dbReference type="Gene3D" id="3.10.20.30">
    <property type="match status" value="1"/>
</dbReference>
<dbReference type="Gene3D" id="3.30.54.20">
    <property type="match status" value="1"/>
</dbReference>
<dbReference type="Gene3D" id="3.40.50.800">
    <property type="entry name" value="Anticodon-binding domain"/>
    <property type="match status" value="1"/>
</dbReference>
<dbReference type="Gene3D" id="3.30.930.10">
    <property type="entry name" value="Bira Bifunctional Protein, Domain 2"/>
    <property type="match status" value="1"/>
</dbReference>
<dbReference type="Gene3D" id="3.30.980.10">
    <property type="entry name" value="Threonyl-trna Synthetase, Chain A, domain 2"/>
    <property type="match status" value="1"/>
</dbReference>
<dbReference type="HAMAP" id="MF_00184">
    <property type="entry name" value="Thr_tRNA_synth"/>
    <property type="match status" value="1"/>
</dbReference>
<dbReference type="InterPro" id="IPR002314">
    <property type="entry name" value="aa-tRNA-synt_IIb"/>
</dbReference>
<dbReference type="InterPro" id="IPR006195">
    <property type="entry name" value="aa-tRNA-synth_II"/>
</dbReference>
<dbReference type="InterPro" id="IPR045864">
    <property type="entry name" value="aa-tRNA-synth_II/BPL/LPL"/>
</dbReference>
<dbReference type="InterPro" id="IPR004154">
    <property type="entry name" value="Anticodon-bd"/>
</dbReference>
<dbReference type="InterPro" id="IPR036621">
    <property type="entry name" value="Anticodon-bd_dom_sf"/>
</dbReference>
<dbReference type="InterPro" id="IPR012675">
    <property type="entry name" value="Beta-grasp_dom_sf"/>
</dbReference>
<dbReference type="InterPro" id="IPR004095">
    <property type="entry name" value="TGS"/>
</dbReference>
<dbReference type="InterPro" id="IPR012676">
    <property type="entry name" value="TGS-like"/>
</dbReference>
<dbReference type="InterPro" id="IPR002320">
    <property type="entry name" value="Thr-tRNA-ligase_IIa"/>
</dbReference>
<dbReference type="InterPro" id="IPR018163">
    <property type="entry name" value="Thr/Ala-tRNA-synth_IIc_edit"/>
</dbReference>
<dbReference type="InterPro" id="IPR047246">
    <property type="entry name" value="ThrRS_anticodon"/>
</dbReference>
<dbReference type="InterPro" id="IPR033728">
    <property type="entry name" value="ThrRS_core"/>
</dbReference>
<dbReference type="InterPro" id="IPR012947">
    <property type="entry name" value="tRNA_SAD"/>
</dbReference>
<dbReference type="NCBIfam" id="TIGR00418">
    <property type="entry name" value="thrS"/>
    <property type="match status" value="1"/>
</dbReference>
<dbReference type="PANTHER" id="PTHR11451:SF56">
    <property type="entry name" value="THREONINE--TRNA LIGASE 1"/>
    <property type="match status" value="1"/>
</dbReference>
<dbReference type="PANTHER" id="PTHR11451">
    <property type="entry name" value="THREONINE-TRNA LIGASE"/>
    <property type="match status" value="1"/>
</dbReference>
<dbReference type="Pfam" id="PF03129">
    <property type="entry name" value="HGTP_anticodon"/>
    <property type="match status" value="1"/>
</dbReference>
<dbReference type="Pfam" id="PF02824">
    <property type="entry name" value="TGS"/>
    <property type="match status" value="1"/>
</dbReference>
<dbReference type="Pfam" id="PF00587">
    <property type="entry name" value="tRNA-synt_2b"/>
    <property type="match status" value="1"/>
</dbReference>
<dbReference type="Pfam" id="PF07973">
    <property type="entry name" value="tRNA_SAD"/>
    <property type="match status" value="1"/>
</dbReference>
<dbReference type="PRINTS" id="PR01047">
    <property type="entry name" value="TRNASYNTHTHR"/>
</dbReference>
<dbReference type="SMART" id="SM00863">
    <property type="entry name" value="tRNA_SAD"/>
    <property type="match status" value="1"/>
</dbReference>
<dbReference type="SUPFAM" id="SSF52954">
    <property type="entry name" value="Class II aaRS ABD-related"/>
    <property type="match status" value="1"/>
</dbReference>
<dbReference type="SUPFAM" id="SSF55681">
    <property type="entry name" value="Class II aaRS and biotin synthetases"/>
    <property type="match status" value="1"/>
</dbReference>
<dbReference type="SUPFAM" id="SSF81271">
    <property type="entry name" value="TGS-like"/>
    <property type="match status" value="1"/>
</dbReference>
<dbReference type="SUPFAM" id="SSF55186">
    <property type="entry name" value="ThrRS/AlaRS common domain"/>
    <property type="match status" value="1"/>
</dbReference>
<dbReference type="PROSITE" id="PS50862">
    <property type="entry name" value="AA_TRNA_LIGASE_II"/>
    <property type="match status" value="1"/>
</dbReference>
<dbReference type="PROSITE" id="PS51880">
    <property type="entry name" value="TGS"/>
    <property type="match status" value="1"/>
</dbReference>
<reference key="1">
    <citation type="journal article" date="2004" name="Nucleic Acids Res.">
        <title>Thermoadaptation trait revealed by the genome sequence of thermophilic Geobacillus kaustophilus.</title>
        <authorList>
            <person name="Takami H."/>
            <person name="Takaki Y."/>
            <person name="Chee G.-J."/>
            <person name="Nishi S."/>
            <person name="Shimamura S."/>
            <person name="Suzuki H."/>
            <person name="Matsui S."/>
            <person name="Uchiyama I."/>
        </authorList>
    </citation>
    <scope>NUCLEOTIDE SEQUENCE [LARGE SCALE GENOMIC DNA]</scope>
    <source>
        <strain>HTA426</strain>
    </source>
</reference>
<gene>
    <name evidence="1" type="primary">thrS</name>
    <name type="ordered locus">GK2719</name>
</gene>
<organism>
    <name type="scientific">Geobacillus kaustophilus (strain HTA426)</name>
    <dbReference type="NCBI Taxonomy" id="235909"/>
    <lineage>
        <taxon>Bacteria</taxon>
        <taxon>Bacillati</taxon>
        <taxon>Bacillota</taxon>
        <taxon>Bacilli</taxon>
        <taxon>Bacillales</taxon>
        <taxon>Anoxybacillaceae</taxon>
        <taxon>Geobacillus</taxon>
        <taxon>Geobacillus thermoleovorans group</taxon>
    </lineage>
</organism>